<sequence length="102" mass="11892">MTEHNHDAELTINNEEELLTLYDENGNEVLYRKMLEFYHPEFKKEYVVLAEEGAQSDDEDMIELVPMINEPDESGDGGKLVPIETDEEWDMIEEVVNTEINE</sequence>
<gene>
    <name type="ordered locus">SE_1298</name>
</gene>
<reference key="1">
    <citation type="journal article" date="2003" name="Mol. Microbiol.">
        <title>Genome-based analysis of virulence genes in a non-biofilm-forming Staphylococcus epidermidis strain (ATCC 12228).</title>
        <authorList>
            <person name="Zhang Y.-Q."/>
            <person name="Ren S.-X."/>
            <person name="Li H.-L."/>
            <person name="Wang Y.-X."/>
            <person name="Fu G."/>
            <person name="Yang J."/>
            <person name="Qin Z.-Q."/>
            <person name="Miao Y.-G."/>
            <person name="Wang W.-Y."/>
            <person name="Chen R.-S."/>
            <person name="Shen Y."/>
            <person name="Chen Z."/>
            <person name="Yuan Z.-H."/>
            <person name="Zhao G.-P."/>
            <person name="Qu D."/>
            <person name="Danchin A."/>
            <person name="Wen Y.-M."/>
        </authorList>
    </citation>
    <scope>NUCLEOTIDE SEQUENCE [LARGE SCALE GENOMIC DNA]</scope>
    <source>
        <strain>ATCC 12228 / FDA PCI 1200</strain>
    </source>
</reference>
<name>Y1298_STAES</name>
<organism>
    <name type="scientific">Staphylococcus epidermidis (strain ATCC 12228 / FDA PCI 1200)</name>
    <dbReference type="NCBI Taxonomy" id="176280"/>
    <lineage>
        <taxon>Bacteria</taxon>
        <taxon>Bacillati</taxon>
        <taxon>Bacillota</taxon>
        <taxon>Bacilli</taxon>
        <taxon>Bacillales</taxon>
        <taxon>Staphylococcaceae</taxon>
        <taxon>Staphylococcus</taxon>
    </lineage>
</organism>
<accession>Q8CSB0</accession>
<evidence type="ECO:0000305" key="1"/>
<proteinExistence type="inferred from homology"/>
<comment type="similarity">
    <text evidence="1">Belongs to the UPF0473 family.</text>
</comment>
<dbReference type="EMBL" id="AE015929">
    <property type="protein sequence ID" value="AAO04897.1"/>
    <property type="molecule type" value="Genomic_DNA"/>
</dbReference>
<dbReference type="RefSeq" id="NP_764853.1">
    <property type="nucleotide sequence ID" value="NC_004461.1"/>
</dbReference>
<dbReference type="RefSeq" id="WP_001830855.1">
    <property type="nucleotide sequence ID" value="NZ_WBME01000053.1"/>
</dbReference>
<dbReference type="KEGG" id="sep:SE_1298"/>
<dbReference type="PATRIC" id="fig|176280.10.peg.1267"/>
<dbReference type="eggNOG" id="COG3906">
    <property type="taxonomic scope" value="Bacteria"/>
</dbReference>
<dbReference type="HOGENOM" id="CLU_146610_2_1_9"/>
<dbReference type="OrthoDB" id="2086132at2"/>
<dbReference type="Proteomes" id="UP000001411">
    <property type="component" value="Chromosome"/>
</dbReference>
<dbReference type="HAMAP" id="MF_01448">
    <property type="entry name" value="UPF0473"/>
    <property type="match status" value="1"/>
</dbReference>
<dbReference type="InterPro" id="IPR009711">
    <property type="entry name" value="UPF0473"/>
</dbReference>
<dbReference type="NCBIfam" id="NF010214">
    <property type="entry name" value="PRK13678.1-1"/>
    <property type="match status" value="1"/>
</dbReference>
<dbReference type="PANTHER" id="PTHR40066">
    <property type="entry name" value="UPF0473 PROTEIN CBO2561/CLC_2432"/>
    <property type="match status" value="1"/>
</dbReference>
<dbReference type="PANTHER" id="PTHR40066:SF1">
    <property type="entry name" value="UPF0473 PROTEIN CBO2561_CLC_2432"/>
    <property type="match status" value="1"/>
</dbReference>
<dbReference type="Pfam" id="PF06949">
    <property type="entry name" value="DUF1292"/>
    <property type="match status" value="1"/>
</dbReference>
<protein>
    <recommendedName>
        <fullName>UPF0473 protein SE_1298</fullName>
    </recommendedName>
</protein>
<feature type="chain" id="PRO_0000299297" description="UPF0473 protein SE_1298">
    <location>
        <begin position="1"/>
        <end position="102"/>
    </location>
</feature>